<keyword id="KW-0238">DNA-binding</keyword>
<keyword id="KW-0479">Metal-binding</keyword>
<keyword id="KW-0539">Nucleus</keyword>
<keyword id="KW-1185">Reference proteome</keyword>
<keyword id="KW-0677">Repeat</keyword>
<keyword id="KW-0804">Transcription</keyword>
<keyword id="KW-0805">Transcription regulation</keyword>
<keyword id="KW-0862">Zinc</keyword>
<keyword id="KW-0863">Zinc-finger</keyword>
<proteinExistence type="inferred from homology"/>
<dbReference type="PIR" id="S06553">
    <property type="entry name" value="S06553"/>
</dbReference>
<dbReference type="SMR" id="P18744"/>
<dbReference type="Proteomes" id="UP000186698">
    <property type="component" value="Unplaced"/>
</dbReference>
<dbReference type="GO" id="GO:0005634">
    <property type="term" value="C:nucleus"/>
    <property type="evidence" value="ECO:0000318"/>
    <property type="project" value="GO_Central"/>
</dbReference>
<dbReference type="GO" id="GO:0001228">
    <property type="term" value="F:DNA-binding transcription activator activity, RNA polymerase II-specific"/>
    <property type="evidence" value="ECO:0000318"/>
    <property type="project" value="GO_Central"/>
</dbReference>
<dbReference type="GO" id="GO:0000978">
    <property type="term" value="F:RNA polymerase II cis-regulatory region sequence-specific DNA binding"/>
    <property type="evidence" value="ECO:0000318"/>
    <property type="project" value="GO_Central"/>
</dbReference>
<dbReference type="GO" id="GO:0008270">
    <property type="term" value="F:zinc ion binding"/>
    <property type="evidence" value="ECO:0007669"/>
    <property type="project" value="UniProtKB-KW"/>
</dbReference>
<dbReference type="GO" id="GO:0006357">
    <property type="term" value="P:regulation of transcription by RNA polymerase II"/>
    <property type="evidence" value="ECO:0000318"/>
    <property type="project" value="GO_Central"/>
</dbReference>
<dbReference type="FunFam" id="3.30.160.60:FF:000646">
    <property type="entry name" value="Myeloid zinc finger 1"/>
    <property type="match status" value="1"/>
</dbReference>
<dbReference type="FunFam" id="3.30.160.60:FF:000557">
    <property type="entry name" value="zinc finger and SCAN domain-containing protein 29"/>
    <property type="match status" value="1"/>
</dbReference>
<dbReference type="FunFam" id="3.30.160.60:FF:000478">
    <property type="entry name" value="Zinc finger protein 133"/>
    <property type="match status" value="1"/>
</dbReference>
<dbReference type="FunFam" id="3.30.160.60:FF:000759">
    <property type="entry name" value="zinc finger protein 16"/>
    <property type="match status" value="1"/>
</dbReference>
<dbReference type="FunFam" id="3.30.160.60:FF:001298">
    <property type="entry name" value="zinc finger protein 23 isoform X1"/>
    <property type="match status" value="1"/>
</dbReference>
<dbReference type="FunFam" id="3.30.160.60:FF:002343">
    <property type="entry name" value="Zinc finger protein 33A"/>
    <property type="match status" value="1"/>
</dbReference>
<dbReference type="FunFam" id="3.30.160.60:FF:002450">
    <property type="entry name" value="Zinc finger protein 470"/>
    <property type="match status" value="1"/>
</dbReference>
<dbReference type="FunFam" id="3.30.160.60:FF:000038">
    <property type="entry name" value="Zinc finger protein 624"/>
    <property type="match status" value="1"/>
</dbReference>
<dbReference type="Gene3D" id="3.30.160.60">
    <property type="entry name" value="Classic Zinc Finger"/>
    <property type="match status" value="8"/>
</dbReference>
<dbReference type="InterPro" id="IPR050329">
    <property type="entry name" value="GLI_C2H2-zinc-finger"/>
</dbReference>
<dbReference type="InterPro" id="IPR036236">
    <property type="entry name" value="Znf_C2H2_sf"/>
</dbReference>
<dbReference type="InterPro" id="IPR013087">
    <property type="entry name" value="Znf_C2H2_type"/>
</dbReference>
<dbReference type="PANTHER" id="PTHR19818:SF158">
    <property type="entry name" value="C2H2-TYPE DOMAIN-CONTAINING PROTEIN-RELATED"/>
    <property type="match status" value="1"/>
</dbReference>
<dbReference type="PANTHER" id="PTHR19818">
    <property type="entry name" value="ZINC FINGER PROTEIN ZIC AND GLI"/>
    <property type="match status" value="1"/>
</dbReference>
<dbReference type="Pfam" id="PF00096">
    <property type="entry name" value="zf-C2H2"/>
    <property type="match status" value="8"/>
</dbReference>
<dbReference type="SMART" id="SM00355">
    <property type="entry name" value="ZnF_C2H2"/>
    <property type="match status" value="8"/>
</dbReference>
<dbReference type="SUPFAM" id="SSF57667">
    <property type="entry name" value="beta-beta-alpha zinc fingers"/>
    <property type="match status" value="5"/>
</dbReference>
<dbReference type="PROSITE" id="PS00028">
    <property type="entry name" value="ZINC_FINGER_C2H2_1"/>
    <property type="match status" value="7"/>
</dbReference>
<dbReference type="PROSITE" id="PS50157">
    <property type="entry name" value="ZINC_FINGER_C2H2_2"/>
    <property type="match status" value="8"/>
</dbReference>
<evidence type="ECO:0000255" key="1">
    <source>
        <dbReference type="PROSITE-ProRule" id="PRU00042"/>
    </source>
</evidence>
<evidence type="ECO:0000305" key="2"/>
<organism>
    <name type="scientific">Xenopus laevis</name>
    <name type="common">African clawed frog</name>
    <dbReference type="NCBI Taxonomy" id="8355"/>
    <lineage>
        <taxon>Eukaryota</taxon>
        <taxon>Metazoa</taxon>
        <taxon>Chordata</taxon>
        <taxon>Craniata</taxon>
        <taxon>Vertebrata</taxon>
        <taxon>Euteleostomi</taxon>
        <taxon>Amphibia</taxon>
        <taxon>Batrachia</taxon>
        <taxon>Anura</taxon>
        <taxon>Pipoidea</taxon>
        <taxon>Pipidae</taxon>
        <taxon>Xenopodinae</taxon>
        <taxon>Xenopus</taxon>
        <taxon>Xenopus</taxon>
    </lineage>
</organism>
<accession>P18744</accession>
<name>ZO20_XENLA</name>
<reference key="1">
    <citation type="journal article" date="1989" name="J. Mol. Biol.">
        <title>Second-order repeats in Xenopus laevis finger proteins.</title>
        <authorList>
            <person name="Nietfeld W."/>
            <person name="El-Baradi T."/>
            <person name="Mentzel H."/>
            <person name="Pieler T."/>
            <person name="Koester M."/>
            <person name="Poeting A."/>
            <person name="Knoechel W."/>
        </authorList>
    </citation>
    <scope>NUCLEOTIDE SEQUENCE</scope>
</reference>
<sequence length="247" mass="28277">SATTFYDCRECGKRYTKRNNLYIHQRVHVKEKPFPCTECGKGFSHKSQLIIHQRVHTGEKPFICSECGKGFSKNYGLILHLRVHTGEKPFVCTECGQRFSKNNVLSMHQRVHTGEKPFTCTECGKRFSQKRQLNLHLRVHTGEKPFVCTECGKRFSKNDVLLIHLRVHTGEKPFMCADCGRCFSVSSSLKYHQRICTGKKPLTSTECGESFKLNLNPIIHAEESQSCAECGKCFSSNYNLSLHMRVH</sequence>
<feature type="chain" id="PRO_0000047819" description="Oocyte zinc finger protein XlCOF20">
    <location>
        <begin position="1" status="less than"/>
        <end position="247" status="greater than"/>
    </location>
</feature>
<feature type="zinc finger region" description="C2H2-type 1" evidence="1">
    <location>
        <begin position="6"/>
        <end position="28"/>
    </location>
</feature>
<feature type="zinc finger region" description="C2H2-type 2" evidence="1">
    <location>
        <begin position="34"/>
        <end position="56"/>
    </location>
</feature>
<feature type="zinc finger region" description="C2H2-type 3" evidence="1">
    <location>
        <begin position="62"/>
        <end position="84"/>
    </location>
</feature>
<feature type="zinc finger region" description="C2H2-type 4" evidence="1">
    <location>
        <begin position="90"/>
        <end position="112"/>
    </location>
</feature>
<feature type="zinc finger region" description="C2H2-type 5" evidence="1">
    <location>
        <begin position="118"/>
        <end position="140"/>
    </location>
</feature>
<feature type="zinc finger region" description="C2H2-type 6" evidence="1">
    <location>
        <begin position="146"/>
        <end position="168"/>
    </location>
</feature>
<feature type="zinc finger region" description="C2H2-type 7" evidence="1">
    <location>
        <begin position="174"/>
        <end position="196"/>
    </location>
</feature>
<feature type="zinc finger region" description="C2H2-type 8" evidence="1">
    <location>
        <begin position="225"/>
        <end position="247"/>
    </location>
</feature>
<feature type="non-terminal residue">
    <location>
        <position position="1"/>
    </location>
</feature>
<feature type="non-terminal residue">
    <location>
        <position position="247"/>
    </location>
</feature>
<protein>
    <recommendedName>
        <fullName>Oocyte zinc finger protein XlCOF20</fullName>
    </recommendedName>
</protein>
<comment type="function">
    <text>May be involved in transcriptional regulation.</text>
</comment>
<comment type="subcellular location">
    <subcellularLocation>
        <location evidence="2">Nucleus</location>
    </subcellularLocation>
</comment>
<comment type="similarity">
    <text evidence="2">Belongs to the krueppel C2H2-type zinc-finger protein family.</text>
</comment>